<proteinExistence type="inferred from homology"/>
<reference key="1">
    <citation type="submission" date="2006-09" db="EMBL/GenBank/DDBJ databases">
        <authorList>
            <consortium name="The Klebsiella pneumonia Genome Sequencing Project"/>
            <person name="McClelland M."/>
            <person name="Sanderson E.K."/>
            <person name="Spieth J."/>
            <person name="Clifton W.S."/>
            <person name="Latreille P."/>
            <person name="Sabo A."/>
            <person name="Pepin K."/>
            <person name="Bhonagiri V."/>
            <person name="Porwollik S."/>
            <person name="Ali J."/>
            <person name="Wilson R.K."/>
        </authorList>
    </citation>
    <scope>NUCLEOTIDE SEQUENCE [LARGE SCALE GENOMIC DNA]</scope>
    <source>
        <strain>ATCC 700721 / MGH 78578</strain>
    </source>
</reference>
<accession>A6T8S5</accession>
<keyword id="KW-0997">Cell inner membrane</keyword>
<keyword id="KW-1003">Cell membrane</keyword>
<keyword id="KW-0472">Membrane</keyword>
<keyword id="KW-0812">Transmembrane</keyword>
<keyword id="KW-1133">Transmembrane helix</keyword>
<keyword id="KW-0813">Transport</keyword>
<name>MDTJ_KLEP7</name>
<evidence type="ECO:0000255" key="1">
    <source>
        <dbReference type="HAMAP-Rule" id="MF_01598"/>
    </source>
</evidence>
<feature type="chain" id="PRO_0000331171" description="Spermidine export protein MdtJ">
    <location>
        <begin position="1"/>
        <end position="120"/>
    </location>
</feature>
<feature type="transmembrane region" description="Helical" evidence="1">
    <location>
        <begin position="1"/>
        <end position="21"/>
    </location>
</feature>
<feature type="transmembrane region" description="Helical" evidence="1">
    <location>
        <begin position="31"/>
        <end position="51"/>
    </location>
</feature>
<feature type="transmembrane region" description="Helical" evidence="1">
    <location>
        <begin position="54"/>
        <end position="74"/>
    </location>
</feature>
<feature type="transmembrane region" description="Helical" evidence="1">
    <location>
        <begin position="81"/>
        <end position="101"/>
    </location>
</feature>
<comment type="function">
    <text evidence="1">Catalyzes the excretion of spermidine.</text>
</comment>
<comment type="subunit">
    <text evidence="1">Forms a complex with MdtI.</text>
</comment>
<comment type="subcellular location">
    <subcellularLocation>
        <location evidence="1">Cell inner membrane</location>
        <topology evidence="1">Multi-pass membrane protein</topology>
    </subcellularLocation>
</comment>
<comment type="similarity">
    <text evidence="1">Belongs to the drug/metabolite transporter (DMT) superfamily. Small multidrug resistance (SMR) (TC 2.A.7.1) family. MdtJ subfamily.</text>
</comment>
<organism>
    <name type="scientific">Klebsiella pneumoniae subsp. pneumoniae (strain ATCC 700721 / MGH 78578)</name>
    <dbReference type="NCBI Taxonomy" id="272620"/>
    <lineage>
        <taxon>Bacteria</taxon>
        <taxon>Pseudomonadati</taxon>
        <taxon>Pseudomonadota</taxon>
        <taxon>Gammaproteobacteria</taxon>
        <taxon>Enterobacterales</taxon>
        <taxon>Enterobacteriaceae</taxon>
        <taxon>Klebsiella/Raoultella group</taxon>
        <taxon>Klebsiella</taxon>
        <taxon>Klebsiella pneumoniae complex</taxon>
    </lineage>
</organism>
<gene>
    <name evidence="1" type="primary">mdtJ</name>
    <name type="ordered locus">KPN78578_15350</name>
    <name type="ORF">KPN_01565</name>
</gene>
<dbReference type="EMBL" id="CP000647">
    <property type="protein sequence ID" value="ABR76996.1"/>
    <property type="molecule type" value="Genomic_DNA"/>
</dbReference>
<dbReference type="SMR" id="A6T8S5"/>
<dbReference type="STRING" id="272620.KPN_01565"/>
<dbReference type="PaxDb" id="272620-KPN_01565"/>
<dbReference type="EnsemblBacteria" id="ABR76996">
    <property type="protein sequence ID" value="ABR76996"/>
    <property type="gene ID" value="KPN_01565"/>
</dbReference>
<dbReference type="KEGG" id="kpn:KPN_01565"/>
<dbReference type="HOGENOM" id="CLU_133067_0_0_6"/>
<dbReference type="Proteomes" id="UP000000265">
    <property type="component" value="Chromosome"/>
</dbReference>
<dbReference type="GO" id="GO:0005886">
    <property type="term" value="C:plasma membrane"/>
    <property type="evidence" value="ECO:0007669"/>
    <property type="project" value="UniProtKB-SubCell"/>
</dbReference>
<dbReference type="GO" id="GO:0015199">
    <property type="term" value="F:amino-acid betaine transmembrane transporter activity"/>
    <property type="evidence" value="ECO:0007669"/>
    <property type="project" value="TreeGrafter"/>
</dbReference>
<dbReference type="GO" id="GO:0015297">
    <property type="term" value="F:antiporter activity"/>
    <property type="evidence" value="ECO:0007669"/>
    <property type="project" value="TreeGrafter"/>
</dbReference>
<dbReference type="GO" id="GO:0015220">
    <property type="term" value="F:choline transmembrane transporter activity"/>
    <property type="evidence" value="ECO:0007669"/>
    <property type="project" value="TreeGrafter"/>
</dbReference>
<dbReference type="GO" id="GO:0015606">
    <property type="term" value="F:spermidine transmembrane transporter activity"/>
    <property type="evidence" value="ECO:0007669"/>
    <property type="project" value="UniProtKB-UniRule"/>
</dbReference>
<dbReference type="GO" id="GO:0031460">
    <property type="term" value="P:glycine betaine transport"/>
    <property type="evidence" value="ECO:0007669"/>
    <property type="project" value="TreeGrafter"/>
</dbReference>
<dbReference type="FunFam" id="1.10.3730.20:FF:000001">
    <property type="entry name" value="Quaternary ammonium compound resistance transporter SugE"/>
    <property type="match status" value="1"/>
</dbReference>
<dbReference type="Gene3D" id="1.10.3730.20">
    <property type="match status" value="1"/>
</dbReference>
<dbReference type="HAMAP" id="MF_01598">
    <property type="entry name" value="MdtJ"/>
    <property type="match status" value="1"/>
</dbReference>
<dbReference type="InterPro" id="IPR000390">
    <property type="entry name" value="Small_drug/metabolite_transptr"/>
</dbReference>
<dbReference type="InterPro" id="IPR045324">
    <property type="entry name" value="Small_multidrug_res"/>
</dbReference>
<dbReference type="InterPro" id="IPR023740">
    <property type="entry name" value="Spermidine_export_MdtJ"/>
</dbReference>
<dbReference type="NCBIfam" id="NF007767">
    <property type="entry name" value="PRK10452.1"/>
    <property type="match status" value="1"/>
</dbReference>
<dbReference type="PANTHER" id="PTHR30561">
    <property type="entry name" value="SMR FAMILY PROTON-DEPENDENT DRUG EFFLUX TRANSPORTER SUGE"/>
    <property type="match status" value="1"/>
</dbReference>
<dbReference type="PANTHER" id="PTHR30561:SF2">
    <property type="entry name" value="SPERMIDINE EXPORT PROTEIN MDTJ"/>
    <property type="match status" value="1"/>
</dbReference>
<dbReference type="Pfam" id="PF00893">
    <property type="entry name" value="Multi_Drug_Res"/>
    <property type="match status" value="1"/>
</dbReference>
<dbReference type="SUPFAM" id="SSF103481">
    <property type="entry name" value="Multidrug resistance efflux transporter EmrE"/>
    <property type="match status" value="1"/>
</dbReference>
<protein>
    <recommendedName>
        <fullName evidence="1">Spermidine export protein MdtJ</fullName>
    </recommendedName>
</protein>
<sequence>MFYWILLALAIIAEITGTLSMKWASVSGGHTGFILMLAMIALSYIFLAFAVKKIALGVAYALWEGIGILLITLFSVLLFDESLSLLKIAGLTTLVIGIVLIKSGTQKKASSKQEVAHAAV</sequence>